<reference key="1">
    <citation type="journal article" date="1997" name="J. Biol. Chem.">
        <title>Novel genes encoding 2-aminophenol 1,6-dioxygenase from Pseudomonas species AP-3 growing on 2-aminophenol and catalytic properties of the purified enzyme.</title>
        <authorList>
            <person name="Takenaka S."/>
            <person name="Murakami S."/>
            <person name="Shinke R."/>
            <person name="Hatakeyama K."/>
            <person name="Yukawa H."/>
            <person name="Aoki K."/>
        </authorList>
    </citation>
    <scope>NUCLEOTIDE SEQUENCE [GENOMIC DNA]</scope>
    <scope>FUNCTION</scope>
    <source>
        <strain>AP-3</strain>
    </source>
</reference>
<reference key="2">
    <citation type="journal article" date="2000" name="Arch. Microbiol.">
        <title>Complete nucleotide sequence and functional analysis of the genes for 2-aminophenol metabolism from Pseudomonas sp. AP-3.</title>
        <authorList>
            <person name="Takenaka S."/>
            <person name="Murakami S."/>
            <person name="Kim Y.J."/>
            <person name="Aoki K."/>
        </authorList>
    </citation>
    <scope>NUCLEOTIDE SEQUENCE [GENOMIC DNA]</scope>
    <source>
        <strain>AP-3</strain>
    </source>
</reference>
<gene>
    <name type="primary">amnH</name>
</gene>
<feature type="chain" id="PRO_0000383027" description="Acetaldehyde dehydrogenase">
    <location>
        <begin position="1"/>
        <end position="316"/>
    </location>
</feature>
<feature type="active site" description="Acyl-thioester intermediate" evidence="1">
    <location>
        <position position="131"/>
    </location>
</feature>
<feature type="binding site" evidence="1">
    <location>
        <begin position="13"/>
        <end position="16"/>
    </location>
    <ligand>
        <name>NAD(+)</name>
        <dbReference type="ChEBI" id="CHEBI:57540"/>
    </ligand>
</feature>
<feature type="binding site" evidence="1">
    <location>
        <begin position="162"/>
        <end position="170"/>
    </location>
    <ligand>
        <name>NAD(+)</name>
        <dbReference type="ChEBI" id="CHEBI:57540"/>
    </ligand>
</feature>
<feature type="binding site" evidence="1">
    <location>
        <position position="290"/>
    </location>
    <ligand>
        <name>NAD(+)</name>
        <dbReference type="ChEBI" id="CHEBI:57540"/>
    </ligand>
</feature>
<proteinExistence type="evidence at protein level"/>
<keyword id="KW-0002">3D-structure</keyword>
<keyword id="KW-0058">Aromatic hydrocarbons catabolism</keyword>
<keyword id="KW-0520">NAD</keyword>
<keyword id="KW-0560">Oxidoreductase</keyword>
<name>ACDH_PSESP</name>
<organism>
    <name type="scientific">Pseudomonas sp</name>
    <dbReference type="NCBI Taxonomy" id="306"/>
    <lineage>
        <taxon>Bacteria</taxon>
        <taxon>Pseudomonadati</taxon>
        <taxon>Pseudomonadota</taxon>
        <taxon>Gammaproteobacteria</taxon>
        <taxon>Pseudomonadales</taxon>
        <taxon>Pseudomonadaceae</taxon>
        <taxon>Pseudomonas</taxon>
    </lineage>
</organism>
<comment type="function">
    <text evidence="2">Catalyzes the conversion of acetaldehyde to acetyl-CoA, using NAD(+) and coenzyme A. Is the final enzyme in the meta-cleavage pathway for the degradation of 2-aminophenol.</text>
</comment>
<comment type="catalytic activity">
    <reaction evidence="1">
        <text>acetaldehyde + NAD(+) + CoA = acetyl-CoA + NADH + H(+)</text>
        <dbReference type="Rhea" id="RHEA:23288"/>
        <dbReference type="ChEBI" id="CHEBI:15343"/>
        <dbReference type="ChEBI" id="CHEBI:15378"/>
        <dbReference type="ChEBI" id="CHEBI:57287"/>
        <dbReference type="ChEBI" id="CHEBI:57288"/>
        <dbReference type="ChEBI" id="CHEBI:57540"/>
        <dbReference type="ChEBI" id="CHEBI:57945"/>
        <dbReference type="EC" id="1.2.1.10"/>
    </reaction>
</comment>
<comment type="similarity">
    <text evidence="1 3">Belongs to the acetaldehyde dehydrogenase family.</text>
</comment>
<accession>Q9KWS1</accession>
<protein>
    <recommendedName>
        <fullName evidence="1">Acetaldehyde dehydrogenase</fullName>
        <ecNumber evidence="1">1.2.1.10</ecNumber>
    </recommendedName>
    <alternativeName>
        <fullName evidence="1">Acetaldehyde dehydrogenase [acetylating]</fullName>
    </alternativeName>
</protein>
<dbReference type="EC" id="1.2.1.10" evidence="1"/>
<dbReference type="EMBL" id="AB020521">
    <property type="protein sequence ID" value="BAB03537.1"/>
    <property type="molecule type" value="Genomic_DNA"/>
</dbReference>
<dbReference type="PDB" id="8IH7">
    <property type="method" value="X-ray"/>
    <property type="resolution" value="2.48 A"/>
    <property type="chains" value="B/D=1-316"/>
</dbReference>
<dbReference type="PDBsum" id="8IH7"/>
<dbReference type="SMR" id="Q9KWS1"/>
<dbReference type="GO" id="GO:0008774">
    <property type="term" value="F:acetaldehyde dehydrogenase (acetylating) activity"/>
    <property type="evidence" value="ECO:0007669"/>
    <property type="project" value="UniProtKB-UniRule"/>
</dbReference>
<dbReference type="GO" id="GO:0051287">
    <property type="term" value="F:NAD binding"/>
    <property type="evidence" value="ECO:0007669"/>
    <property type="project" value="UniProtKB-UniRule"/>
</dbReference>
<dbReference type="GO" id="GO:0009056">
    <property type="term" value="P:catabolic process"/>
    <property type="evidence" value="ECO:0007669"/>
    <property type="project" value="UniProtKB-KW"/>
</dbReference>
<dbReference type="CDD" id="cd23933">
    <property type="entry name" value="ALDH_C"/>
    <property type="match status" value="1"/>
</dbReference>
<dbReference type="Gene3D" id="3.30.360.10">
    <property type="entry name" value="Dihydrodipicolinate Reductase, domain 2"/>
    <property type="match status" value="1"/>
</dbReference>
<dbReference type="Gene3D" id="3.40.50.720">
    <property type="entry name" value="NAD(P)-binding Rossmann-like Domain"/>
    <property type="match status" value="1"/>
</dbReference>
<dbReference type="HAMAP" id="MF_01657">
    <property type="entry name" value="Ac_ald_DH_ac"/>
    <property type="match status" value="1"/>
</dbReference>
<dbReference type="InterPro" id="IPR003361">
    <property type="entry name" value="Acetaldehyde_dehydrogenase"/>
</dbReference>
<dbReference type="InterPro" id="IPR015426">
    <property type="entry name" value="Acetylaldehyde_DH_C"/>
</dbReference>
<dbReference type="InterPro" id="IPR036291">
    <property type="entry name" value="NAD(P)-bd_dom_sf"/>
</dbReference>
<dbReference type="InterPro" id="IPR000534">
    <property type="entry name" value="Semialdehyde_DH_NAD-bd"/>
</dbReference>
<dbReference type="NCBIfam" id="TIGR03215">
    <property type="entry name" value="ac_ald_DH_ac"/>
    <property type="match status" value="1"/>
</dbReference>
<dbReference type="NCBIfam" id="NF006157">
    <property type="entry name" value="PRK08300.1"/>
    <property type="match status" value="1"/>
</dbReference>
<dbReference type="Pfam" id="PF09290">
    <property type="entry name" value="AcetDehyd-dimer"/>
    <property type="match status" value="1"/>
</dbReference>
<dbReference type="Pfam" id="PF01118">
    <property type="entry name" value="Semialdhyde_dh"/>
    <property type="match status" value="1"/>
</dbReference>
<dbReference type="PIRSF" id="PIRSF015689">
    <property type="entry name" value="Actaldh_dh_actl"/>
    <property type="match status" value="1"/>
</dbReference>
<dbReference type="SMART" id="SM00859">
    <property type="entry name" value="Semialdhyde_dh"/>
    <property type="match status" value="1"/>
</dbReference>
<dbReference type="SUPFAM" id="SSF55347">
    <property type="entry name" value="Glyceraldehyde-3-phosphate dehydrogenase-like, C-terminal domain"/>
    <property type="match status" value="1"/>
</dbReference>
<dbReference type="SUPFAM" id="SSF51735">
    <property type="entry name" value="NAD(P)-binding Rossmann-fold domains"/>
    <property type="match status" value="1"/>
</dbReference>
<evidence type="ECO:0000255" key="1">
    <source>
        <dbReference type="HAMAP-Rule" id="MF_01657"/>
    </source>
</evidence>
<evidence type="ECO:0000269" key="2">
    <source>
    </source>
</evidence>
<evidence type="ECO:0000305" key="3"/>
<sequence length="316" mass="33170">MSDDRLSVAIIGSGNIGTDLMIKIMRNSKLLKVGAMVGIDPKSDGLARAQRLGVPTTAEGVDGLLDMPAFRDIKIAFDATSAGAQAIHNQKLQAHGVRVIDLTPAAIGPYVIPVVNFDQHVDAPNINMVTCGGQATIPIVHAVSKVSPVHYAEIVASISSKSAGPGTRANIDEFTETTSKAILEVGGAAQGRAIIILNPAEPPLIMRDTVYCFVSAEANIDAITDSVEQMVKSVQEYVPGYRLKQKVQFEKIVAGNEQNIPGLGWSTGLKVSVFLEVEGAGHYLPSYAGNLDIMTSAGLTVAERIAGSGVQVGGLK</sequence>